<proteinExistence type="inferred from homology"/>
<reference key="1">
    <citation type="journal article" date="2003" name="Proc. Natl. Acad. Sci. U.S.A.">
        <title>The genome sequence of Blochmannia floridanus: comparative analysis of reduced genomes.</title>
        <authorList>
            <person name="Gil R."/>
            <person name="Silva F.J."/>
            <person name="Zientz E."/>
            <person name="Delmotte F."/>
            <person name="Gonzalez-Candelas F."/>
            <person name="Latorre A."/>
            <person name="Rausell C."/>
            <person name="Kamerbeek J."/>
            <person name="Gadau J."/>
            <person name="Hoelldobler B."/>
            <person name="van Ham R.C.H.J."/>
            <person name="Gross R."/>
            <person name="Moya A."/>
        </authorList>
    </citation>
    <scope>NUCLEOTIDE SEQUENCE [LARGE SCALE GENOMIC DNA]</scope>
</reference>
<dbReference type="EMBL" id="BX248583">
    <property type="protein sequence ID" value="CAD83725.1"/>
    <property type="molecule type" value="Genomic_DNA"/>
</dbReference>
<dbReference type="SMR" id="Q7VQC9"/>
<dbReference type="STRING" id="203907.Bfl210"/>
<dbReference type="KEGG" id="bfl:Bfl210"/>
<dbReference type="eggNOG" id="COG0200">
    <property type="taxonomic scope" value="Bacteria"/>
</dbReference>
<dbReference type="HOGENOM" id="CLU_055188_4_2_6"/>
<dbReference type="OrthoDB" id="9810293at2"/>
<dbReference type="Proteomes" id="UP000002192">
    <property type="component" value="Chromosome"/>
</dbReference>
<dbReference type="GO" id="GO:0022625">
    <property type="term" value="C:cytosolic large ribosomal subunit"/>
    <property type="evidence" value="ECO:0007669"/>
    <property type="project" value="TreeGrafter"/>
</dbReference>
<dbReference type="GO" id="GO:0019843">
    <property type="term" value="F:rRNA binding"/>
    <property type="evidence" value="ECO:0007669"/>
    <property type="project" value="UniProtKB-UniRule"/>
</dbReference>
<dbReference type="GO" id="GO:0003735">
    <property type="term" value="F:structural constituent of ribosome"/>
    <property type="evidence" value="ECO:0007669"/>
    <property type="project" value="InterPro"/>
</dbReference>
<dbReference type="GO" id="GO:0006412">
    <property type="term" value="P:translation"/>
    <property type="evidence" value="ECO:0007669"/>
    <property type="project" value="UniProtKB-UniRule"/>
</dbReference>
<dbReference type="Gene3D" id="3.100.10.10">
    <property type="match status" value="1"/>
</dbReference>
<dbReference type="HAMAP" id="MF_01341">
    <property type="entry name" value="Ribosomal_uL15"/>
    <property type="match status" value="1"/>
</dbReference>
<dbReference type="InterPro" id="IPR030878">
    <property type="entry name" value="Ribosomal_uL15"/>
</dbReference>
<dbReference type="InterPro" id="IPR021131">
    <property type="entry name" value="Ribosomal_uL15/eL18"/>
</dbReference>
<dbReference type="InterPro" id="IPR036227">
    <property type="entry name" value="Ribosomal_uL15/eL18_sf"/>
</dbReference>
<dbReference type="InterPro" id="IPR005749">
    <property type="entry name" value="Ribosomal_uL15_bac-type"/>
</dbReference>
<dbReference type="NCBIfam" id="TIGR01071">
    <property type="entry name" value="rplO_bact"/>
    <property type="match status" value="1"/>
</dbReference>
<dbReference type="PANTHER" id="PTHR12934">
    <property type="entry name" value="50S RIBOSOMAL PROTEIN L15"/>
    <property type="match status" value="1"/>
</dbReference>
<dbReference type="PANTHER" id="PTHR12934:SF11">
    <property type="entry name" value="LARGE RIBOSOMAL SUBUNIT PROTEIN UL15M"/>
    <property type="match status" value="1"/>
</dbReference>
<dbReference type="Pfam" id="PF00828">
    <property type="entry name" value="Ribosomal_L27A"/>
    <property type="match status" value="1"/>
</dbReference>
<dbReference type="SUPFAM" id="SSF52080">
    <property type="entry name" value="Ribosomal proteins L15p and L18e"/>
    <property type="match status" value="1"/>
</dbReference>
<feature type="chain" id="PRO_0000251490" description="Large ribosomal subunit protein uL15">
    <location>
        <begin position="1"/>
        <end position="147"/>
    </location>
</feature>
<comment type="function">
    <text evidence="1">Binds to the 23S rRNA.</text>
</comment>
<comment type="subunit">
    <text evidence="1">Part of the 50S ribosomal subunit.</text>
</comment>
<comment type="similarity">
    <text evidence="1">Belongs to the universal ribosomal protein uL15 family.</text>
</comment>
<name>RL15_BLOFL</name>
<organism>
    <name type="scientific">Blochmanniella floridana</name>
    <dbReference type="NCBI Taxonomy" id="203907"/>
    <lineage>
        <taxon>Bacteria</taxon>
        <taxon>Pseudomonadati</taxon>
        <taxon>Pseudomonadota</taxon>
        <taxon>Gammaproteobacteria</taxon>
        <taxon>Enterobacterales</taxon>
        <taxon>Enterobacteriaceae</taxon>
        <taxon>ant endosymbionts</taxon>
        <taxon>Candidatus Blochmanniella</taxon>
    </lineage>
</organism>
<gene>
    <name evidence="1" type="primary">rplO</name>
    <name type="ordered locus">Bfl210</name>
</gene>
<accession>Q7VQC9</accession>
<sequence>MFSLNTIAPALGAKRVGKRVARGIGSGFGKTAGRGHKGQKSRSGCKIKVSFEGGQTPLHRRLPKFGFKSRKSIVTQEITLFDLSRIPENVIDLNVLKKYDIVSRKIRFVKIIMSGTFDKPVIIRNLRISKGARDLIKSVGGRIEEGE</sequence>
<protein>
    <recommendedName>
        <fullName evidence="1">Large ribosomal subunit protein uL15</fullName>
    </recommendedName>
    <alternativeName>
        <fullName evidence="2">50S ribosomal protein L15</fullName>
    </alternativeName>
</protein>
<keyword id="KW-1185">Reference proteome</keyword>
<keyword id="KW-0687">Ribonucleoprotein</keyword>
<keyword id="KW-0689">Ribosomal protein</keyword>
<keyword id="KW-0694">RNA-binding</keyword>
<keyword id="KW-0699">rRNA-binding</keyword>
<evidence type="ECO:0000255" key="1">
    <source>
        <dbReference type="HAMAP-Rule" id="MF_01341"/>
    </source>
</evidence>
<evidence type="ECO:0000305" key="2"/>